<reference key="1">
    <citation type="journal article" date="2006" name="Lancet">
        <title>Complete genome sequence of USA300, an epidemic clone of community-acquired meticillin-resistant Staphylococcus aureus.</title>
        <authorList>
            <person name="Diep B.A."/>
            <person name="Gill S.R."/>
            <person name="Chang R.F."/>
            <person name="Phan T.H."/>
            <person name="Chen J.H."/>
            <person name="Davidson M.G."/>
            <person name="Lin F."/>
            <person name="Lin J."/>
            <person name="Carleton H.A."/>
            <person name="Mongodin E.F."/>
            <person name="Sensabaugh G.F."/>
            <person name="Perdreau-Remington F."/>
        </authorList>
    </citation>
    <scope>NUCLEOTIDE SEQUENCE [LARGE SCALE GENOMIC DNA]</scope>
    <source>
        <strain>USA300</strain>
    </source>
</reference>
<protein>
    <recommendedName>
        <fullName evidence="1">tRNA-specific 2-thiouridylase MnmA</fullName>
        <ecNumber evidence="1">2.8.1.13</ecNumber>
    </recommendedName>
</protein>
<comment type="function">
    <text evidence="1">Catalyzes the 2-thiolation of uridine at the wobble position (U34) of tRNA, leading to the formation of s(2)U34.</text>
</comment>
<comment type="catalytic activity">
    <reaction evidence="1">
        <text>S-sulfanyl-L-cysteinyl-[protein] + uridine(34) in tRNA + AH2 + ATP = 2-thiouridine(34) in tRNA + L-cysteinyl-[protein] + A + AMP + diphosphate + H(+)</text>
        <dbReference type="Rhea" id="RHEA:47032"/>
        <dbReference type="Rhea" id="RHEA-COMP:10131"/>
        <dbReference type="Rhea" id="RHEA-COMP:11726"/>
        <dbReference type="Rhea" id="RHEA-COMP:11727"/>
        <dbReference type="Rhea" id="RHEA-COMP:11728"/>
        <dbReference type="ChEBI" id="CHEBI:13193"/>
        <dbReference type="ChEBI" id="CHEBI:15378"/>
        <dbReference type="ChEBI" id="CHEBI:17499"/>
        <dbReference type="ChEBI" id="CHEBI:29950"/>
        <dbReference type="ChEBI" id="CHEBI:30616"/>
        <dbReference type="ChEBI" id="CHEBI:33019"/>
        <dbReference type="ChEBI" id="CHEBI:61963"/>
        <dbReference type="ChEBI" id="CHEBI:65315"/>
        <dbReference type="ChEBI" id="CHEBI:87170"/>
        <dbReference type="ChEBI" id="CHEBI:456215"/>
        <dbReference type="EC" id="2.8.1.13"/>
    </reaction>
</comment>
<comment type="subcellular location">
    <subcellularLocation>
        <location evidence="1">Cytoplasm</location>
    </subcellularLocation>
</comment>
<comment type="similarity">
    <text evidence="1">Belongs to the MnmA/TRMU family.</text>
</comment>
<comment type="sequence caution" evidence="2">
    <conflict type="erroneous initiation">
        <sequence resource="EMBL-CDS" id="ABD22598"/>
    </conflict>
</comment>
<organism>
    <name type="scientific">Staphylococcus aureus (strain USA300)</name>
    <dbReference type="NCBI Taxonomy" id="367830"/>
    <lineage>
        <taxon>Bacteria</taxon>
        <taxon>Bacillati</taxon>
        <taxon>Bacillota</taxon>
        <taxon>Bacilli</taxon>
        <taxon>Bacillales</taxon>
        <taxon>Staphylococcaceae</taxon>
        <taxon>Staphylococcus</taxon>
    </lineage>
</organism>
<proteinExistence type="inferred from homology"/>
<gene>
    <name evidence="1" type="primary">mnmA</name>
    <name type="ordered locus">SAUSA300_1578</name>
</gene>
<evidence type="ECO:0000255" key="1">
    <source>
        <dbReference type="HAMAP-Rule" id="MF_00144"/>
    </source>
</evidence>
<evidence type="ECO:0000305" key="2"/>
<sequence>MSNKDIRVVVGMSGGVDSSVTAHVLKEQGYDVIGIFMKNWDDTDENGVCTATEDYNDVIEVCNQIGIPYYAVNFEKEYWDKVFTYFLDEYKKGRTPNPDVMCNKEIKFKAFLDHAMNLGADYVATGHYARIHRHEDGHVEMLRGVDNNKDQTYFLNQLSQQQLSKVMFPIGDIEKSEVRRIAEEQGLVTAKKKDSTGICFIGEKNFKTFLSQYLPAQPGDMITLDGKKMGKHSGLMYYTIGQRHGLGIGGDGDPWFVVGKNLKDNVLYVEQGFHHDALYSDYLIASDYSFVNPEDNDLDQGFECTAKFRYRQKDTKVFVKRENDHALRVTFAEPVRAITPGQAVVFYQGDVCLGGATIDDVFKNEGQLNYVV</sequence>
<dbReference type="EC" id="2.8.1.13" evidence="1"/>
<dbReference type="EMBL" id="CP000255">
    <property type="protein sequence ID" value="ABD22598.1"/>
    <property type="status" value="ALT_INIT"/>
    <property type="molecule type" value="Genomic_DNA"/>
</dbReference>
<dbReference type="RefSeq" id="WP_000066097.1">
    <property type="nucleotide sequence ID" value="NZ_CP027476.1"/>
</dbReference>
<dbReference type="SMR" id="Q2FGA5"/>
<dbReference type="KEGG" id="saa:SAUSA300_1578"/>
<dbReference type="HOGENOM" id="CLU_035188_1_0_9"/>
<dbReference type="OMA" id="PFYVWDL"/>
<dbReference type="Proteomes" id="UP000001939">
    <property type="component" value="Chromosome"/>
</dbReference>
<dbReference type="GO" id="GO:0005737">
    <property type="term" value="C:cytoplasm"/>
    <property type="evidence" value="ECO:0007669"/>
    <property type="project" value="UniProtKB-SubCell"/>
</dbReference>
<dbReference type="GO" id="GO:0005524">
    <property type="term" value="F:ATP binding"/>
    <property type="evidence" value="ECO:0007669"/>
    <property type="project" value="UniProtKB-KW"/>
</dbReference>
<dbReference type="GO" id="GO:0000049">
    <property type="term" value="F:tRNA binding"/>
    <property type="evidence" value="ECO:0007669"/>
    <property type="project" value="UniProtKB-KW"/>
</dbReference>
<dbReference type="GO" id="GO:0103016">
    <property type="term" value="F:tRNA-uridine 2-sulfurtransferase activity"/>
    <property type="evidence" value="ECO:0007669"/>
    <property type="project" value="UniProtKB-EC"/>
</dbReference>
<dbReference type="GO" id="GO:0002143">
    <property type="term" value="P:tRNA wobble position uridine thiolation"/>
    <property type="evidence" value="ECO:0007669"/>
    <property type="project" value="TreeGrafter"/>
</dbReference>
<dbReference type="CDD" id="cd01998">
    <property type="entry name" value="MnmA_TRMU-like"/>
    <property type="match status" value="1"/>
</dbReference>
<dbReference type="FunFam" id="2.30.30.280:FF:000001">
    <property type="entry name" value="tRNA-specific 2-thiouridylase MnmA"/>
    <property type="match status" value="1"/>
</dbReference>
<dbReference type="FunFam" id="2.40.30.10:FF:000023">
    <property type="entry name" value="tRNA-specific 2-thiouridylase MnmA"/>
    <property type="match status" value="1"/>
</dbReference>
<dbReference type="FunFam" id="3.40.50.620:FF:000004">
    <property type="entry name" value="tRNA-specific 2-thiouridylase MnmA"/>
    <property type="match status" value="1"/>
</dbReference>
<dbReference type="Gene3D" id="2.30.30.280">
    <property type="entry name" value="Adenine nucleotide alpha hydrolases-like domains"/>
    <property type="match status" value="1"/>
</dbReference>
<dbReference type="Gene3D" id="3.40.50.620">
    <property type="entry name" value="HUPs"/>
    <property type="match status" value="1"/>
</dbReference>
<dbReference type="Gene3D" id="2.40.30.10">
    <property type="entry name" value="Translation factors"/>
    <property type="match status" value="1"/>
</dbReference>
<dbReference type="HAMAP" id="MF_00144">
    <property type="entry name" value="tRNA_thiouridyl_MnmA"/>
    <property type="match status" value="1"/>
</dbReference>
<dbReference type="InterPro" id="IPR004506">
    <property type="entry name" value="MnmA-like"/>
</dbReference>
<dbReference type="InterPro" id="IPR046885">
    <property type="entry name" value="MnmA-like_C"/>
</dbReference>
<dbReference type="InterPro" id="IPR046884">
    <property type="entry name" value="MnmA-like_central"/>
</dbReference>
<dbReference type="InterPro" id="IPR023382">
    <property type="entry name" value="MnmA-like_central_sf"/>
</dbReference>
<dbReference type="InterPro" id="IPR014729">
    <property type="entry name" value="Rossmann-like_a/b/a_fold"/>
</dbReference>
<dbReference type="NCBIfam" id="NF001138">
    <property type="entry name" value="PRK00143.1"/>
    <property type="match status" value="1"/>
</dbReference>
<dbReference type="NCBIfam" id="TIGR00420">
    <property type="entry name" value="trmU"/>
    <property type="match status" value="1"/>
</dbReference>
<dbReference type="PANTHER" id="PTHR11933:SF5">
    <property type="entry name" value="MITOCHONDRIAL TRNA-SPECIFIC 2-THIOURIDYLASE 1"/>
    <property type="match status" value="1"/>
</dbReference>
<dbReference type="PANTHER" id="PTHR11933">
    <property type="entry name" value="TRNA 5-METHYLAMINOMETHYL-2-THIOURIDYLATE -METHYLTRANSFERASE"/>
    <property type="match status" value="1"/>
</dbReference>
<dbReference type="Pfam" id="PF03054">
    <property type="entry name" value="tRNA_Me_trans"/>
    <property type="match status" value="1"/>
</dbReference>
<dbReference type="Pfam" id="PF20258">
    <property type="entry name" value="tRNA_Me_trans_C"/>
    <property type="match status" value="1"/>
</dbReference>
<dbReference type="Pfam" id="PF20259">
    <property type="entry name" value="tRNA_Me_trans_M"/>
    <property type="match status" value="1"/>
</dbReference>
<dbReference type="SUPFAM" id="SSF52402">
    <property type="entry name" value="Adenine nucleotide alpha hydrolases-like"/>
    <property type="match status" value="1"/>
</dbReference>
<keyword id="KW-0067">ATP-binding</keyword>
<keyword id="KW-0963">Cytoplasm</keyword>
<keyword id="KW-1015">Disulfide bond</keyword>
<keyword id="KW-0547">Nucleotide-binding</keyword>
<keyword id="KW-0694">RNA-binding</keyword>
<keyword id="KW-0808">Transferase</keyword>
<keyword id="KW-0819">tRNA processing</keyword>
<keyword id="KW-0820">tRNA-binding</keyword>
<accession>Q2FGA5</accession>
<name>MNMA_STAA3</name>
<feature type="chain" id="PRO_0000349807" description="tRNA-specific 2-thiouridylase MnmA">
    <location>
        <begin position="1"/>
        <end position="372"/>
    </location>
</feature>
<feature type="region of interest" description="Interaction with target base in tRNA" evidence="1">
    <location>
        <begin position="97"/>
        <end position="99"/>
    </location>
</feature>
<feature type="region of interest" description="Interaction with tRNA" evidence="1">
    <location>
        <begin position="149"/>
        <end position="151"/>
    </location>
</feature>
<feature type="region of interest" description="Interaction with tRNA" evidence="1">
    <location>
        <begin position="309"/>
        <end position="310"/>
    </location>
</feature>
<feature type="active site" description="Nucleophile" evidence="1">
    <location>
        <position position="102"/>
    </location>
</feature>
<feature type="active site" description="Cysteine persulfide intermediate" evidence="1">
    <location>
        <position position="199"/>
    </location>
</feature>
<feature type="binding site" evidence="1">
    <location>
        <begin position="11"/>
        <end position="18"/>
    </location>
    <ligand>
        <name>ATP</name>
        <dbReference type="ChEBI" id="CHEBI:30616"/>
    </ligand>
</feature>
<feature type="binding site" evidence="1">
    <location>
        <position position="37"/>
    </location>
    <ligand>
        <name>ATP</name>
        <dbReference type="ChEBI" id="CHEBI:30616"/>
    </ligand>
</feature>
<feature type="binding site" evidence="1">
    <location>
        <position position="126"/>
    </location>
    <ligand>
        <name>ATP</name>
        <dbReference type="ChEBI" id="CHEBI:30616"/>
    </ligand>
</feature>
<feature type="site" description="Interaction with tRNA" evidence="1">
    <location>
        <position position="127"/>
    </location>
</feature>
<feature type="site" description="Interaction with tRNA" evidence="1">
    <location>
        <position position="342"/>
    </location>
</feature>
<feature type="disulfide bond" description="Alternate" evidence="1">
    <location>
        <begin position="102"/>
        <end position="199"/>
    </location>
</feature>